<feature type="chain" id="PRO_0000195091" description="Arginyl-tRNA--protein transferase 1">
    <location>
        <begin position="1"/>
        <end position="632"/>
    </location>
</feature>
<feature type="region of interest" description="Disordered" evidence="1">
    <location>
        <begin position="1"/>
        <end position="27"/>
    </location>
</feature>
<feature type="region of interest" description="Disordered" evidence="1">
    <location>
        <begin position="113"/>
        <end position="144"/>
    </location>
</feature>
<feature type="region of interest" description="Disordered" evidence="1">
    <location>
        <begin position="284"/>
        <end position="312"/>
    </location>
</feature>
<feature type="region of interest" description="Disordered" evidence="1">
    <location>
        <begin position="517"/>
        <end position="580"/>
    </location>
</feature>
<feature type="compositionally biased region" description="Polar residues" evidence="1">
    <location>
        <begin position="1"/>
        <end position="18"/>
    </location>
</feature>
<feature type="compositionally biased region" description="Basic and acidic residues" evidence="1">
    <location>
        <begin position="113"/>
        <end position="122"/>
    </location>
</feature>
<feature type="compositionally biased region" description="Polar residues" evidence="1">
    <location>
        <begin position="285"/>
        <end position="296"/>
    </location>
</feature>
<feature type="compositionally biased region" description="Basic and acidic residues" evidence="1">
    <location>
        <begin position="298"/>
        <end position="310"/>
    </location>
</feature>
<feature type="compositionally biased region" description="Acidic residues" evidence="1">
    <location>
        <begin position="538"/>
        <end position="563"/>
    </location>
</feature>
<feature type="compositionally biased region" description="Basic and acidic residues" evidence="1">
    <location>
        <begin position="564"/>
        <end position="578"/>
    </location>
</feature>
<feature type="sequence conflict" description="In Ref. 4; BAD44222." evidence="10" ref="4">
    <original>S</original>
    <variation>N</variation>
    <location>
        <position position="15"/>
    </location>
</feature>
<feature type="sequence conflict" description="In Ref. 4; BAD43125." evidence="10" ref="4">
    <original>F</original>
    <variation>S</variation>
    <location>
        <position position="356"/>
    </location>
</feature>
<feature type="sequence conflict" description="In Ref. 1; AAD12368." evidence="10" ref="1">
    <location>
        <begin position="546"/>
        <end position="548"/>
    </location>
</feature>
<evidence type="ECO:0000256" key="1">
    <source>
        <dbReference type="SAM" id="MobiDB-lite"/>
    </source>
</evidence>
<evidence type="ECO:0000269" key="2">
    <source>
    </source>
</evidence>
<evidence type="ECO:0000269" key="3">
    <source>
    </source>
</evidence>
<evidence type="ECO:0000269" key="4">
    <source>
    </source>
</evidence>
<evidence type="ECO:0000269" key="5">
    <source>
    </source>
</evidence>
<evidence type="ECO:0000269" key="6">
    <source>
    </source>
</evidence>
<evidence type="ECO:0000303" key="7">
    <source>
    </source>
</evidence>
<evidence type="ECO:0000303" key="8">
    <source>
    </source>
</evidence>
<evidence type="ECO:0000303" key="9">
    <source>
    </source>
</evidence>
<evidence type="ECO:0000305" key="10"/>
<evidence type="ECO:0000312" key="11">
    <source>
        <dbReference type="Araport" id="AT5G05700"/>
    </source>
</evidence>
<evidence type="ECO:0000312" key="12">
    <source>
        <dbReference type="EMBL" id="BAB09664.1"/>
    </source>
</evidence>
<comment type="function">
    <text evidence="2 3 4 5 6">Involved in the post-translational conjugation of arginine to the N-terminal aspartate or glutamate of a protein. This arginylation is required for degradation of the protein via the ubiquitin pathway. Component of the N-end rule pathway with ATE2 and PRT6 (PubMed:19255443, PubMed:19620738, PubMed:22020282). The N-end rule pathway regulates seed after-ripening, seedling sugar sensitivity, seedling lipid breakdown, and abscisic acid (ABA) sensitivity of germination (PubMed:19255443). The end-rule pathway regulates various aspects of leaf and shoot development (PubMed:19620738). Involved in the oxygen-dependent N-arginylation of RAP2-12, an activator of hypoxic gene expression. This N-terminal modification leads to ubiquitination by PRT6 and subsequent degradation of RAP2-12 under aerobic conditions (PubMed:22020282). Has an important role in the progression of leaf senescence (PubMed:12366806). Involved in disease resistance (PubMed:27173012). The end-rule pathway plays a role in regulating the timing and amplitude of the immune response following infection with the bacterial pathogen Pseudomonas syringae pv tomato (PubMed:27173012). Regulates the biosynthesis of plant-defense metabolites such as glucosinolates, and the biosynthesis and response to the phytohormone jasmonate (JA), which plays a key role in plant immunity (PubMed:27173012).</text>
</comment>
<comment type="catalytic activity">
    <reaction evidence="10">
        <text>an N-terminal L-alpha-aminoacyl-[protein] + L-arginyl-tRNA(Arg) = an N-terminal L-arginyl-L-aminoacyl-[protein] + tRNA(Arg) + H(+)</text>
        <dbReference type="Rhea" id="RHEA:10208"/>
        <dbReference type="Rhea" id="RHEA-COMP:9658"/>
        <dbReference type="Rhea" id="RHEA-COMP:9673"/>
        <dbReference type="Rhea" id="RHEA-COMP:10636"/>
        <dbReference type="Rhea" id="RHEA-COMP:10638"/>
        <dbReference type="ChEBI" id="CHEBI:15378"/>
        <dbReference type="ChEBI" id="CHEBI:78442"/>
        <dbReference type="ChEBI" id="CHEBI:78513"/>
        <dbReference type="ChEBI" id="CHEBI:78597"/>
        <dbReference type="ChEBI" id="CHEBI:83562"/>
        <dbReference type="EC" id="2.3.2.8"/>
    </reaction>
</comment>
<comment type="interaction">
    <interactant intactId="EBI-25522944">
        <id>Q9ZT48</id>
    </interactant>
    <interactant intactId="EBI-15192335">
        <id>C0SUW7</id>
        <label>ARID6</label>
    </interactant>
    <organismsDiffer>false</organismsDiffer>
    <experiments>3</experiments>
</comment>
<comment type="interaction">
    <interactant intactId="EBI-25522944">
        <id>Q9ZT48</id>
    </interactant>
    <interactant intactId="EBI-2367867">
        <id>Q1PF16</id>
        <label>BHLH19</label>
    </interactant>
    <organismsDiffer>false</organismsDiffer>
    <experiments>3</experiments>
</comment>
<comment type="interaction">
    <interactant intactId="EBI-25522944">
        <id>Q9ZT48</id>
    </interactant>
    <interactant intactId="EBI-1571089">
        <id>O80450</id>
        <label>GT-3B</label>
    </interactant>
    <organismsDiffer>false</organismsDiffer>
    <experiments>3</experiments>
</comment>
<comment type="interaction">
    <interactant intactId="EBI-25522944">
        <id>Q9ZT48</id>
    </interactant>
    <interactant intactId="EBI-4426144">
        <id>Q9C9L2</id>
        <label>TCP15</label>
    </interactant>
    <organismsDiffer>false</organismsDiffer>
    <experiments>3</experiments>
</comment>
<comment type="interaction">
    <interactant intactId="EBI-25522944">
        <id>Q9ZT48</id>
    </interactant>
    <interactant intactId="EBI-25522447">
        <id>Q9MAH8</id>
        <label>TCP3</label>
    </interactant>
    <organismsDiffer>false</organismsDiffer>
    <experiments>3</experiments>
</comment>
<comment type="disruption phenotype">
    <text evidence="2 3 4">Delayed leaf senescence phenotype (PubMed:12366806). The double mutants ate1 and ate2 show reduced seed germination potential and inhibition of seedling establishment by sucrose (PubMed:19255443). The double mutants ate1 and ate2 exhibit abnormal shoot and leaf development (PubMed:19620738).</text>
</comment>
<comment type="similarity">
    <text evidence="10">Belongs to the R-transferase family.</text>
</comment>
<protein>
    <recommendedName>
        <fullName evidence="10">Arginyl-tRNA--protein transferase 1</fullName>
        <shortName evidence="10">Arginyltransferase 1</shortName>
        <shortName evidence="10">R-transferase 1</shortName>
        <ecNumber evidence="10">2.3.2.8</ecNumber>
    </recommendedName>
    <alternativeName>
        <fullName evidence="9">Arginine-tRNA--protein transferase 1</fullName>
    </alternativeName>
    <alternativeName>
        <fullName evidence="8">AtATE1</fullName>
    </alternativeName>
    <alternativeName>
        <fullName evidence="7">Protein DELAYED-LEAF-SENESCENCE 1</fullName>
    </alternativeName>
</protein>
<reference key="1">
    <citation type="journal article" date="1999" name="Mol. Cell. Biol.">
        <title>Alternative splicing results in differential expression, activity, and localization of the two forms of arginyl-tRNA-protein transferase, a component of the N-end rule pathway.</title>
        <authorList>
            <person name="Kwon Y.T."/>
            <person name="Kashina A.S."/>
            <person name="Varshavsky A."/>
        </authorList>
    </citation>
    <scope>NUCLEOTIDE SEQUENCE [MRNA]</scope>
</reference>
<reference key="2">
    <citation type="journal article" date="1997" name="DNA Res.">
        <title>Structural analysis of Arabidopsis thaliana chromosome 5. I. Sequence features of the 1.6 Mb regions covered by twenty physically assigned P1 clones.</title>
        <authorList>
            <person name="Sato S."/>
            <person name="Kotani H."/>
            <person name="Nakamura Y."/>
            <person name="Kaneko T."/>
            <person name="Asamizu E."/>
            <person name="Fukami M."/>
            <person name="Miyajima N."/>
            <person name="Tabata S."/>
        </authorList>
    </citation>
    <scope>NUCLEOTIDE SEQUENCE [LARGE SCALE GENOMIC DNA]</scope>
    <source>
        <strain>cv. Columbia</strain>
    </source>
</reference>
<reference key="3">
    <citation type="journal article" date="2017" name="Plant J.">
        <title>Araport11: a complete reannotation of the Arabidopsis thaliana reference genome.</title>
        <authorList>
            <person name="Cheng C.Y."/>
            <person name="Krishnakumar V."/>
            <person name="Chan A.P."/>
            <person name="Thibaud-Nissen F."/>
            <person name="Schobel S."/>
            <person name="Town C.D."/>
        </authorList>
    </citation>
    <scope>GENOME REANNOTATION</scope>
    <source>
        <strain>cv. Columbia</strain>
    </source>
</reference>
<reference key="4">
    <citation type="submission" date="2004-09" db="EMBL/GenBank/DDBJ databases">
        <title>Large-scale analysis of RIKEN Arabidopsis full-length (RAFL) cDNAs.</title>
        <authorList>
            <person name="Totoki Y."/>
            <person name="Seki M."/>
            <person name="Ishida J."/>
            <person name="Nakajima M."/>
            <person name="Enju A."/>
            <person name="Kamiya A."/>
            <person name="Narusaka M."/>
            <person name="Shin-i T."/>
            <person name="Nakagawa M."/>
            <person name="Sakamoto N."/>
            <person name="Oishi K."/>
            <person name="Kohara Y."/>
            <person name="Kobayashi M."/>
            <person name="Toyoda A."/>
            <person name="Sakaki Y."/>
            <person name="Sakurai T."/>
            <person name="Iida K."/>
            <person name="Akiyama K."/>
            <person name="Satou M."/>
            <person name="Toyoda T."/>
            <person name="Konagaya A."/>
            <person name="Carninci P."/>
            <person name="Kawai J."/>
            <person name="Hayashizaki Y."/>
            <person name="Shinozaki K."/>
        </authorList>
    </citation>
    <scope>NUCLEOTIDE SEQUENCE [LARGE SCALE MRNA]</scope>
    <source>
        <strain>cv. Columbia</strain>
    </source>
</reference>
<reference key="5">
    <citation type="submission" date="2008-10" db="EMBL/GenBank/DDBJ databases">
        <title>Arabidopsis ORF clones.</title>
        <authorList>
            <person name="De Los Reyes C."/>
            <person name="Quan R."/>
            <person name="Chen H."/>
            <person name="Bautista V.R."/>
            <person name="Kim C.J."/>
            <person name="Ecker J.R."/>
        </authorList>
    </citation>
    <scope>NUCLEOTIDE SEQUENCE [LARGE SCALE MRNA]</scope>
    <source>
        <strain>cv. Columbia</strain>
    </source>
</reference>
<reference key="6">
    <citation type="journal article" date="2002" name="Plant J.">
        <title>A delayed leaf senescence mutant is defective in arginyl-tRNA:protein arginyltransferase, a component of the N-end rule pathway in Arabidopsis.</title>
        <authorList>
            <person name="Yoshida S."/>
            <person name="Ito M."/>
            <person name="Callis J."/>
            <person name="Nishida I."/>
            <person name="Watanabe A."/>
        </authorList>
    </citation>
    <scope>FUNCTION</scope>
    <scope>DISRUPTION PHENOTYPE</scope>
</reference>
<reference key="7">
    <citation type="journal article" date="2009" name="Proc. Natl. Acad. Sci. U.S.A.">
        <title>The N-end rule pathway promotes seed germination and establishment through removal of ABA sensitivity in Arabidopsis.</title>
        <authorList>
            <person name="Holman T.J."/>
            <person name="Jones P.D."/>
            <person name="Russell L."/>
            <person name="Medhurst A."/>
            <person name="Ubeda Tomas S."/>
            <person name="Talloji P."/>
            <person name="Marquez J."/>
            <person name="Schmuths H."/>
            <person name="Tung S.A."/>
            <person name="Taylor I."/>
            <person name="Footitt S."/>
            <person name="Bachmair A."/>
            <person name="Theodoulou F.L."/>
            <person name="Holdsworth M.J."/>
        </authorList>
    </citation>
    <scope>FUNCTION</scope>
</reference>
<reference key="8">
    <citation type="journal article" date="2009" name="Proc. Natl. Acad. Sci. U.S.A.">
        <title>The N-end rule pathway controls multiple functions during Arabidopsis shoot and leaf development.</title>
        <authorList>
            <person name="Graciet E."/>
            <person name="Walter F."/>
            <person name="O'Maoileidigh D.S."/>
            <person name="Pollmann S."/>
            <person name="Meyerowitz E.M."/>
            <person name="Varshavsky A."/>
            <person name="Wellmer F."/>
        </authorList>
    </citation>
    <scope>FUNCTION</scope>
    <scope>DISRUPTION PHENOTYPE</scope>
</reference>
<reference key="9">
    <citation type="journal article" date="2011" name="Nature">
        <title>Oxygen sensing in plants is mediated by an N-end rule pathway for protein destabilization.</title>
        <authorList>
            <person name="Licausi F."/>
            <person name="Kosmacz M."/>
            <person name="Weits D.A."/>
            <person name="Giuntoli B."/>
            <person name="Giorgi F.M."/>
            <person name="Voesenek L.A."/>
            <person name="Perata P."/>
            <person name="van Dongen J.T."/>
        </authorList>
    </citation>
    <scope>FUNCTION</scope>
</reference>
<reference key="10">
    <citation type="journal article" date="2016" name="Sci. Rep.">
        <title>The N-end rule pathway regulates pathogen responses in plants.</title>
        <authorList>
            <person name="de Marchi R."/>
            <person name="Sorel M."/>
            <person name="Mooney B."/>
            <person name="Fudal I."/>
            <person name="Goslin K."/>
            <person name="Kwasniewska K."/>
            <person name="Ryan P.T."/>
            <person name="Pfalz M."/>
            <person name="Kroymann J."/>
            <person name="Pollmann S."/>
            <person name="Feechan A."/>
            <person name="Wellmer F."/>
            <person name="Rivas S."/>
            <person name="Graciet E."/>
        </authorList>
    </citation>
    <scope>FUNCTION</scope>
</reference>
<accession>Q9ZT48</accession>
<accession>Q56ZQ7</accession>
<accession>Q67YK9</accession>
<accession>Q682K5</accession>
<proteinExistence type="evidence at protein level"/>
<sequence>MSLKNDASSSHDGGSNRESVIDDHGRRKSTCGYCKSPARSSISHGLSAQTLTVYDYQALIDRGWRRSGTYLYKHEMDKTCCPPYTIRLKASDFVPTKEQQRVSRRLERFLDGKLDVQPREQRGASSSGDVSDTRRKTLGAAKSEENKKVEAVMDDLSKNIDQAVQLCIRSGEFPSNMQIPKASVKKVFCARRKKLAEGTEQILYTSNIAFPIAAAIKRIQTSEKEGINSAEGNRLSPETISEMLLSAMHKVGETPDVSIKVCKGHINFLSSAKDSFSDRDVVPNGNISRGANSLDGSETLHAKKDSENHQARKRKLEIHLKRSSFDPEEHELYKRYQLKVHNDKPGHVVESSYRRFLVDSPLIDVQPSGDEKVPPCGFGSFHQQYRIDGRLIAVGVVDILPKCLSSVYLFWDPDYAFLSLGKYSAIQEINWVIENQARCPSLQYYYLGYYIHSCSKMRYKAAYRPSELLCPLRFQWVPFEVARPMLDKKPYVILSDIAISHNQCSLLAGASETLVEPAASEHEDMEQGETNDNFMGCSDEDEDEDEDDDDDDDDDEEMYETESEDSHIESDPGSKDNDINNILIGLYGSQYRYKEMRQIITPVGRKQLEPMLQSYRKVVGAELSERMVYEIN</sequence>
<gene>
    <name evidence="9" type="primary">ATE1</name>
    <name evidence="7" type="synonym">DLS1</name>
    <name evidence="11" type="ordered locus">At5g05700</name>
    <name evidence="12" type="ORF">MJJ3.10</name>
</gene>
<name>ATE1_ARATH</name>
<dbReference type="EC" id="2.3.2.8" evidence="10"/>
<dbReference type="EMBL" id="AF079100">
    <property type="protein sequence ID" value="AAD12368.1"/>
    <property type="molecule type" value="mRNA"/>
</dbReference>
<dbReference type="EMBL" id="AB005237">
    <property type="protein sequence ID" value="BAB09664.1"/>
    <property type="molecule type" value="Genomic_DNA"/>
</dbReference>
<dbReference type="EMBL" id="CP002688">
    <property type="protein sequence ID" value="AED90912.1"/>
    <property type="molecule type" value="Genomic_DNA"/>
</dbReference>
<dbReference type="EMBL" id="AK175362">
    <property type="protein sequence ID" value="BAD43125.1"/>
    <property type="molecule type" value="mRNA"/>
</dbReference>
<dbReference type="EMBL" id="AK176459">
    <property type="protein sequence ID" value="BAD44222.1"/>
    <property type="molecule type" value="mRNA"/>
</dbReference>
<dbReference type="EMBL" id="AK220906">
    <property type="protein sequence ID" value="BAD94343.1"/>
    <property type="molecule type" value="mRNA"/>
</dbReference>
<dbReference type="EMBL" id="BT046177">
    <property type="protein sequence ID" value="ACI49776.1"/>
    <property type="molecule type" value="mRNA"/>
</dbReference>
<dbReference type="PIR" id="T51729">
    <property type="entry name" value="T51729"/>
</dbReference>
<dbReference type="RefSeq" id="NP_196189.1">
    <property type="nucleotide sequence ID" value="NM_120652.4"/>
</dbReference>
<dbReference type="BioGRID" id="15733">
    <property type="interactions" value="6"/>
</dbReference>
<dbReference type="FunCoup" id="Q9ZT48">
    <property type="interactions" value="4495"/>
</dbReference>
<dbReference type="IntAct" id="Q9ZT48">
    <property type="interactions" value="5"/>
</dbReference>
<dbReference type="STRING" id="3702.Q9ZT48"/>
<dbReference type="iPTMnet" id="Q9ZT48"/>
<dbReference type="PaxDb" id="3702-AT5G05700.1"/>
<dbReference type="ProteomicsDB" id="246540"/>
<dbReference type="EnsemblPlants" id="AT5G05700.1">
    <property type="protein sequence ID" value="AT5G05700.1"/>
    <property type="gene ID" value="AT5G05700"/>
</dbReference>
<dbReference type="GeneID" id="830454"/>
<dbReference type="Gramene" id="AT5G05700.1">
    <property type="protein sequence ID" value="AT5G05700.1"/>
    <property type="gene ID" value="AT5G05700"/>
</dbReference>
<dbReference type="KEGG" id="ath:AT5G05700"/>
<dbReference type="Araport" id="AT5G05700"/>
<dbReference type="TAIR" id="AT5G05700">
    <property type="gene designation" value="ATE1"/>
</dbReference>
<dbReference type="eggNOG" id="KOG1193">
    <property type="taxonomic scope" value="Eukaryota"/>
</dbReference>
<dbReference type="HOGENOM" id="CLU_020349_1_0_1"/>
<dbReference type="InParanoid" id="Q9ZT48"/>
<dbReference type="OMA" id="SDRMVYS"/>
<dbReference type="OrthoDB" id="74183at2759"/>
<dbReference type="PhylomeDB" id="Q9ZT48"/>
<dbReference type="BRENDA" id="2.3.2.8">
    <property type="organism ID" value="399"/>
</dbReference>
<dbReference type="PRO" id="PR:Q9ZT48"/>
<dbReference type="Proteomes" id="UP000006548">
    <property type="component" value="Chromosome 5"/>
</dbReference>
<dbReference type="ExpressionAtlas" id="Q9ZT48">
    <property type="expression patterns" value="baseline and differential"/>
</dbReference>
<dbReference type="GO" id="GO:0004057">
    <property type="term" value="F:arginyl-tRNA--protein transferase activity"/>
    <property type="evidence" value="ECO:0000315"/>
    <property type="project" value="TAIR"/>
</dbReference>
<dbReference type="GO" id="GO:0050832">
    <property type="term" value="P:defense response to fungus"/>
    <property type="evidence" value="ECO:0000316"/>
    <property type="project" value="TAIR"/>
</dbReference>
<dbReference type="GO" id="GO:0010150">
    <property type="term" value="P:leaf senescence"/>
    <property type="evidence" value="ECO:0000315"/>
    <property type="project" value="TAIR"/>
</dbReference>
<dbReference type="GO" id="GO:0050994">
    <property type="term" value="P:regulation of lipid catabolic process"/>
    <property type="evidence" value="ECO:0000316"/>
    <property type="project" value="TAIR"/>
</dbReference>
<dbReference type="GO" id="GO:0010029">
    <property type="term" value="P:regulation of seed germination"/>
    <property type="evidence" value="ECO:0000316"/>
    <property type="project" value="TAIR"/>
</dbReference>
<dbReference type="GO" id="GO:0009737">
    <property type="term" value="P:response to abscisic acid"/>
    <property type="evidence" value="ECO:0000316"/>
    <property type="project" value="TAIR"/>
</dbReference>
<dbReference type="InterPro" id="IPR016181">
    <property type="entry name" value="Acyl_CoA_acyltransferase"/>
</dbReference>
<dbReference type="InterPro" id="IPR017137">
    <property type="entry name" value="Arg-tRNA-P_Trfase_1_euk"/>
</dbReference>
<dbReference type="InterPro" id="IPR030700">
    <property type="entry name" value="N-end_Aminoacyl_Trfase"/>
</dbReference>
<dbReference type="InterPro" id="IPR007472">
    <property type="entry name" value="N-end_Aminoacyl_Trfase_C"/>
</dbReference>
<dbReference type="InterPro" id="IPR007471">
    <property type="entry name" value="N-end_Aminoacyl_Trfase_N"/>
</dbReference>
<dbReference type="PANTHER" id="PTHR21367">
    <property type="entry name" value="ARGININE-TRNA-PROTEIN TRANSFERASE 1"/>
    <property type="match status" value="1"/>
</dbReference>
<dbReference type="PANTHER" id="PTHR21367:SF4">
    <property type="entry name" value="ARGINYL-TRNA--PROTEIN TRANSFERASE 1"/>
    <property type="match status" value="1"/>
</dbReference>
<dbReference type="Pfam" id="PF04377">
    <property type="entry name" value="ATE_C"/>
    <property type="match status" value="1"/>
</dbReference>
<dbReference type="Pfam" id="PF04376">
    <property type="entry name" value="ATE_N"/>
    <property type="match status" value="1"/>
</dbReference>
<dbReference type="PIRSF" id="PIRSF037207">
    <property type="entry name" value="ATE1_euk"/>
    <property type="match status" value="1"/>
</dbReference>
<dbReference type="SUPFAM" id="SSF55729">
    <property type="entry name" value="Acyl-CoA N-acyltransferases (Nat)"/>
    <property type="match status" value="1"/>
</dbReference>
<keyword id="KW-0012">Acyltransferase</keyword>
<keyword id="KW-0611">Plant defense</keyword>
<keyword id="KW-1185">Reference proteome</keyword>
<keyword id="KW-0808">Transferase</keyword>
<keyword id="KW-0833">Ubl conjugation pathway</keyword>
<organism>
    <name type="scientific">Arabidopsis thaliana</name>
    <name type="common">Mouse-ear cress</name>
    <dbReference type="NCBI Taxonomy" id="3702"/>
    <lineage>
        <taxon>Eukaryota</taxon>
        <taxon>Viridiplantae</taxon>
        <taxon>Streptophyta</taxon>
        <taxon>Embryophyta</taxon>
        <taxon>Tracheophyta</taxon>
        <taxon>Spermatophyta</taxon>
        <taxon>Magnoliopsida</taxon>
        <taxon>eudicotyledons</taxon>
        <taxon>Gunneridae</taxon>
        <taxon>Pentapetalae</taxon>
        <taxon>rosids</taxon>
        <taxon>malvids</taxon>
        <taxon>Brassicales</taxon>
        <taxon>Brassicaceae</taxon>
        <taxon>Camelineae</taxon>
        <taxon>Arabidopsis</taxon>
    </lineage>
</organism>